<comment type="similarity">
    <text evidence="1">Belongs to the bacterial ribosomal protein bL33 family.</text>
</comment>
<organism>
    <name type="scientific">Staphylococcus aureus (strain Mu3 / ATCC 700698)</name>
    <dbReference type="NCBI Taxonomy" id="418127"/>
    <lineage>
        <taxon>Bacteria</taxon>
        <taxon>Bacillati</taxon>
        <taxon>Bacillota</taxon>
        <taxon>Bacilli</taxon>
        <taxon>Bacillales</taxon>
        <taxon>Staphylococcaceae</taxon>
        <taxon>Staphylococcus</taxon>
    </lineage>
</organism>
<accession>A7X2U5</accession>
<feature type="chain" id="PRO_0000356688" description="Large ribosomal subunit protein bL33B">
    <location>
        <begin position="1"/>
        <end position="49"/>
    </location>
</feature>
<evidence type="ECO:0000255" key="1">
    <source>
        <dbReference type="HAMAP-Rule" id="MF_00294"/>
    </source>
</evidence>
<name>RL332_STAA1</name>
<sequence>MRVNVTLACTECGDRNYITTKNKRNNPERVEMKKFCSRENKQTLHRETK</sequence>
<dbReference type="EMBL" id="AP009324">
    <property type="protein sequence ID" value="BAF78421.1"/>
    <property type="molecule type" value="Genomic_DNA"/>
</dbReference>
<dbReference type="SMR" id="A7X2U5"/>
<dbReference type="KEGG" id="saw:SAHV_1538"/>
<dbReference type="HOGENOM" id="CLU_190949_0_2_9"/>
<dbReference type="GO" id="GO:0005737">
    <property type="term" value="C:cytoplasm"/>
    <property type="evidence" value="ECO:0007669"/>
    <property type="project" value="UniProtKB-ARBA"/>
</dbReference>
<dbReference type="GO" id="GO:1990904">
    <property type="term" value="C:ribonucleoprotein complex"/>
    <property type="evidence" value="ECO:0007669"/>
    <property type="project" value="UniProtKB-KW"/>
</dbReference>
<dbReference type="GO" id="GO:0005840">
    <property type="term" value="C:ribosome"/>
    <property type="evidence" value="ECO:0007669"/>
    <property type="project" value="UniProtKB-KW"/>
</dbReference>
<dbReference type="GO" id="GO:0003735">
    <property type="term" value="F:structural constituent of ribosome"/>
    <property type="evidence" value="ECO:0007669"/>
    <property type="project" value="InterPro"/>
</dbReference>
<dbReference type="GO" id="GO:0006412">
    <property type="term" value="P:translation"/>
    <property type="evidence" value="ECO:0007669"/>
    <property type="project" value="UniProtKB-UniRule"/>
</dbReference>
<dbReference type="Gene3D" id="2.20.28.120">
    <property type="entry name" value="Ribosomal protein L33"/>
    <property type="match status" value="1"/>
</dbReference>
<dbReference type="HAMAP" id="MF_00294">
    <property type="entry name" value="Ribosomal_bL33"/>
    <property type="match status" value="1"/>
</dbReference>
<dbReference type="InterPro" id="IPR001705">
    <property type="entry name" value="Ribosomal_bL33"/>
</dbReference>
<dbReference type="InterPro" id="IPR018264">
    <property type="entry name" value="Ribosomal_bL33_CS"/>
</dbReference>
<dbReference type="InterPro" id="IPR038584">
    <property type="entry name" value="Ribosomal_bL33_sf"/>
</dbReference>
<dbReference type="InterPro" id="IPR011332">
    <property type="entry name" value="Ribosomal_zn-bd"/>
</dbReference>
<dbReference type="NCBIfam" id="NF001764">
    <property type="entry name" value="PRK00504.1"/>
    <property type="match status" value="1"/>
</dbReference>
<dbReference type="NCBIfam" id="NF001860">
    <property type="entry name" value="PRK00595.1"/>
    <property type="match status" value="1"/>
</dbReference>
<dbReference type="NCBIfam" id="TIGR01023">
    <property type="entry name" value="rpmG_bact"/>
    <property type="match status" value="1"/>
</dbReference>
<dbReference type="PANTHER" id="PTHR43168">
    <property type="entry name" value="50S RIBOSOMAL PROTEIN L33, CHLOROPLASTIC"/>
    <property type="match status" value="1"/>
</dbReference>
<dbReference type="PANTHER" id="PTHR43168:SF2">
    <property type="entry name" value="LARGE RIBOSOMAL SUBUNIT PROTEIN BL33C"/>
    <property type="match status" value="1"/>
</dbReference>
<dbReference type="Pfam" id="PF00471">
    <property type="entry name" value="Ribosomal_L33"/>
    <property type="match status" value="1"/>
</dbReference>
<dbReference type="SUPFAM" id="SSF57829">
    <property type="entry name" value="Zn-binding ribosomal proteins"/>
    <property type="match status" value="1"/>
</dbReference>
<dbReference type="PROSITE" id="PS00582">
    <property type="entry name" value="RIBOSOMAL_L33"/>
    <property type="match status" value="1"/>
</dbReference>
<gene>
    <name evidence="1" type="primary">rpmG2</name>
    <name type="ordered locus">SAHV_1538</name>
</gene>
<reference key="1">
    <citation type="journal article" date="2008" name="Antimicrob. Agents Chemother.">
        <title>Mutated response regulator graR is responsible for phenotypic conversion of Staphylococcus aureus from heterogeneous vancomycin-intermediate resistance to vancomycin-intermediate resistance.</title>
        <authorList>
            <person name="Neoh H.-M."/>
            <person name="Cui L."/>
            <person name="Yuzawa H."/>
            <person name="Takeuchi F."/>
            <person name="Matsuo M."/>
            <person name="Hiramatsu K."/>
        </authorList>
    </citation>
    <scope>NUCLEOTIDE SEQUENCE [LARGE SCALE GENOMIC DNA]</scope>
    <source>
        <strain>Mu3 / ATCC 700698</strain>
    </source>
</reference>
<keyword id="KW-0687">Ribonucleoprotein</keyword>
<keyword id="KW-0689">Ribosomal protein</keyword>
<protein>
    <recommendedName>
        <fullName evidence="1">Large ribosomal subunit protein bL33B</fullName>
    </recommendedName>
    <alternativeName>
        <fullName evidence="1">50S ribosomal protein L33 2</fullName>
    </alternativeName>
</protein>
<proteinExistence type="inferred from homology"/>